<comment type="function">
    <text evidence="1">NAD-binding protein involved in the addition of a carboxymethylaminomethyl (cmnm) group at the wobble position (U34) of certain tRNAs, forming tRNA-cmnm(5)s(2)U34.</text>
</comment>
<comment type="cofactor">
    <cofactor evidence="1">
        <name>FAD</name>
        <dbReference type="ChEBI" id="CHEBI:57692"/>
    </cofactor>
</comment>
<comment type="subunit">
    <text evidence="1">Homodimer. Heterotetramer of two MnmE and two MnmG subunits.</text>
</comment>
<comment type="subcellular location">
    <subcellularLocation>
        <location evidence="1">Cytoplasm</location>
    </subcellularLocation>
</comment>
<comment type="similarity">
    <text evidence="1">Belongs to the MnmG family.</text>
</comment>
<proteinExistence type="inferred from homology"/>
<gene>
    <name evidence="1" type="primary">mnmG</name>
    <name evidence="1" type="synonym">gidA</name>
    <name type="ordered locus">RBE_1352</name>
</gene>
<name>MNMG_RICBR</name>
<organism>
    <name type="scientific">Rickettsia bellii (strain RML369-C)</name>
    <dbReference type="NCBI Taxonomy" id="336407"/>
    <lineage>
        <taxon>Bacteria</taxon>
        <taxon>Pseudomonadati</taxon>
        <taxon>Pseudomonadota</taxon>
        <taxon>Alphaproteobacteria</taxon>
        <taxon>Rickettsiales</taxon>
        <taxon>Rickettsiaceae</taxon>
        <taxon>Rickettsieae</taxon>
        <taxon>Rickettsia</taxon>
        <taxon>belli group</taxon>
    </lineage>
</organism>
<sequence>MQKYDVIVIGGGHAGVEAAAASARLGVSTLLITPKSENLGEMSCNPAIGGIAKGTLVKEIDALDGLMGYVIDQAGIHYKMLNETRGPAVWGPRAQADRKLYKKAMYQILTNYPNLEILYAKVEDIEIKSSEIKAVILNNGSKIPCQKIILTTGTFLSGLIHIGSKKIPAGRVDEEPSYGLSNTLRRIGFKLSRLKTGTPPRIDGRTIDYSKVESQPGDKVPRPFSELTDNVNVPQINCFVTKTTTETHNVIRANLDKSAMYSGQIEGIGPRYCPSIEDKIVRFSTKSEHRIFLEPEGVDDHTIYPNGISTSLPEEVQHQLIKTIPGLENAIILRPGYAIEYDYIDPREISSTLETKKITGLYFAGQINGTTGYEEAAGQGIVAGINAALAVKNQPPFILTRANSYIGVMIDDLTSFGTLEPYRMFTSRSEYRLSIRADNADLRLTEMGISIGVISEKRKEIFTIKCKNIESTKSLLNTLCLTTSKLAKMGIQVAQDGTYKTVLDLFKIPNFDVEQAIKIFPVLKNVDNNILQLLYIEAKYASYLVRQYADINLFQSEEAQLIPKNIDYFKIPSISLEIQEKLSYNKPITIVAARRIPGVTPAAITAIIIYLKTKYNDRRST</sequence>
<evidence type="ECO:0000255" key="1">
    <source>
        <dbReference type="HAMAP-Rule" id="MF_00129"/>
    </source>
</evidence>
<keyword id="KW-0963">Cytoplasm</keyword>
<keyword id="KW-0274">FAD</keyword>
<keyword id="KW-0285">Flavoprotein</keyword>
<keyword id="KW-0520">NAD</keyword>
<keyword id="KW-0819">tRNA processing</keyword>
<dbReference type="EMBL" id="CP000087">
    <property type="protein sequence ID" value="ABE05433.1"/>
    <property type="molecule type" value="Genomic_DNA"/>
</dbReference>
<dbReference type="RefSeq" id="WP_011478002.1">
    <property type="nucleotide sequence ID" value="NC_007940.1"/>
</dbReference>
<dbReference type="SMR" id="Q1RGT1"/>
<dbReference type="KEGG" id="rbe:RBE_1352"/>
<dbReference type="eggNOG" id="COG0445">
    <property type="taxonomic scope" value="Bacteria"/>
</dbReference>
<dbReference type="HOGENOM" id="CLU_007831_2_2_5"/>
<dbReference type="OrthoDB" id="9815560at2"/>
<dbReference type="Proteomes" id="UP000001951">
    <property type="component" value="Chromosome"/>
</dbReference>
<dbReference type="GO" id="GO:0005829">
    <property type="term" value="C:cytosol"/>
    <property type="evidence" value="ECO:0007669"/>
    <property type="project" value="TreeGrafter"/>
</dbReference>
<dbReference type="GO" id="GO:0050660">
    <property type="term" value="F:flavin adenine dinucleotide binding"/>
    <property type="evidence" value="ECO:0007669"/>
    <property type="project" value="UniProtKB-UniRule"/>
</dbReference>
<dbReference type="GO" id="GO:0030488">
    <property type="term" value="P:tRNA methylation"/>
    <property type="evidence" value="ECO:0007669"/>
    <property type="project" value="TreeGrafter"/>
</dbReference>
<dbReference type="GO" id="GO:0002098">
    <property type="term" value="P:tRNA wobble uridine modification"/>
    <property type="evidence" value="ECO:0007669"/>
    <property type="project" value="InterPro"/>
</dbReference>
<dbReference type="FunFam" id="3.50.50.60:FF:000082">
    <property type="entry name" value="protein MTO1 homolog, mitochondrial isoform X1"/>
    <property type="match status" value="1"/>
</dbReference>
<dbReference type="FunFam" id="1.10.150.570:FF:000001">
    <property type="entry name" value="tRNA uridine 5-carboxymethylaminomethyl modification enzyme MnmG"/>
    <property type="match status" value="1"/>
</dbReference>
<dbReference type="FunFam" id="3.50.50.60:FF:000002">
    <property type="entry name" value="tRNA uridine 5-carboxymethylaminomethyl modification enzyme MnmG"/>
    <property type="match status" value="1"/>
</dbReference>
<dbReference type="Gene3D" id="3.50.50.60">
    <property type="entry name" value="FAD/NAD(P)-binding domain"/>
    <property type="match status" value="2"/>
</dbReference>
<dbReference type="Gene3D" id="1.10.150.570">
    <property type="entry name" value="GidA associated domain, C-terminal subdomain"/>
    <property type="match status" value="1"/>
</dbReference>
<dbReference type="HAMAP" id="MF_00129">
    <property type="entry name" value="MnmG_GidA"/>
    <property type="match status" value="1"/>
</dbReference>
<dbReference type="InterPro" id="IPR036188">
    <property type="entry name" value="FAD/NAD-bd_sf"/>
</dbReference>
<dbReference type="InterPro" id="IPR049312">
    <property type="entry name" value="GIDA_C_N"/>
</dbReference>
<dbReference type="InterPro" id="IPR004416">
    <property type="entry name" value="MnmG"/>
</dbReference>
<dbReference type="InterPro" id="IPR002218">
    <property type="entry name" value="MnmG-rel"/>
</dbReference>
<dbReference type="InterPro" id="IPR020595">
    <property type="entry name" value="MnmG-rel_CS"/>
</dbReference>
<dbReference type="InterPro" id="IPR026904">
    <property type="entry name" value="MnmG_C"/>
</dbReference>
<dbReference type="InterPro" id="IPR047001">
    <property type="entry name" value="MnmG_C_subdom"/>
</dbReference>
<dbReference type="InterPro" id="IPR044920">
    <property type="entry name" value="MnmG_C_subdom_sf"/>
</dbReference>
<dbReference type="InterPro" id="IPR040131">
    <property type="entry name" value="MnmG_N"/>
</dbReference>
<dbReference type="NCBIfam" id="TIGR00136">
    <property type="entry name" value="mnmG_gidA"/>
    <property type="match status" value="1"/>
</dbReference>
<dbReference type="PANTHER" id="PTHR11806">
    <property type="entry name" value="GLUCOSE INHIBITED DIVISION PROTEIN A"/>
    <property type="match status" value="1"/>
</dbReference>
<dbReference type="PANTHER" id="PTHR11806:SF0">
    <property type="entry name" value="PROTEIN MTO1 HOMOLOG, MITOCHONDRIAL"/>
    <property type="match status" value="1"/>
</dbReference>
<dbReference type="Pfam" id="PF01134">
    <property type="entry name" value="GIDA"/>
    <property type="match status" value="1"/>
</dbReference>
<dbReference type="Pfam" id="PF21680">
    <property type="entry name" value="GIDA_C_1st"/>
    <property type="match status" value="1"/>
</dbReference>
<dbReference type="Pfam" id="PF13932">
    <property type="entry name" value="SAM_GIDA_C"/>
    <property type="match status" value="1"/>
</dbReference>
<dbReference type="PRINTS" id="PR00411">
    <property type="entry name" value="PNDRDTASEI"/>
</dbReference>
<dbReference type="SMART" id="SM01228">
    <property type="entry name" value="GIDA_assoc_3"/>
    <property type="match status" value="1"/>
</dbReference>
<dbReference type="SUPFAM" id="SSF51905">
    <property type="entry name" value="FAD/NAD(P)-binding domain"/>
    <property type="match status" value="1"/>
</dbReference>
<dbReference type="PROSITE" id="PS01280">
    <property type="entry name" value="GIDA_1"/>
    <property type="match status" value="1"/>
</dbReference>
<dbReference type="PROSITE" id="PS01281">
    <property type="entry name" value="GIDA_2"/>
    <property type="match status" value="1"/>
</dbReference>
<accession>Q1RGT1</accession>
<reference key="1">
    <citation type="journal article" date="2006" name="PLoS Genet.">
        <title>Genome sequence of Rickettsia bellii illuminates the role of amoebae in gene exchanges between intracellular pathogens.</title>
        <authorList>
            <person name="Ogata H."/>
            <person name="La Scola B."/>
            <person name="Audic S."/>
            <person name="Renesto P."/>
            <person name="Blanc G."/>
            <person name="Robert C."/>
            <person name="Fournier P.-E."/>
            <person name="Claverie J.-M."/>
            <person name="Raoult D."/>
        </authorList>
    </citation>
    <scope>NUCLEOTIDE SEQUENCE [LARGE SCALE GENOMIC DNA]</scope>
    <source>
        <strain>RML369-C</strain>
    </source>
</reference>
<protein>
    <recommendedName>
        <fullName evidence="1">tRNA uridine 5-carboxymethylaminomethyl modification enzyme MnmG</fullName>
    </recommendedName>
    <alternativeName>
        <fullName evidence="1">Glucose-inhibited division protein A</fullName>
    </alternativeName>
</protein>
<feature type="chain" id="PRO_0000274846" description="tRNA uridine 5-carboxymethylaminomethyl modification enzyme MnmG">
    <location>
        <begin position="1"/>
        <end position="621"/>
    </location>
</feature>
<feature type="binding site" evidence="1">
    <location>
        <begin position="10"/>
        <end position="15"/>
    </location>
    <ligand>
        <name>FAD</name>
        <dbReference type="ChEBI" id="CHEBI:57692"/>
    </ligand>
</feature>
<feature type="binding site" evidence="1">
    <location>
        <position position="122"/>
    </location>
    <ligand>
        <name>FAD</name>
        <dbReference type="ChEBI" id="CHEBI:57692"/>
    </ligand>
</feature>
<feature type="binding site" evidence="1">
    <location>
        <position position="177"/>
    </location>
    <ligand>
        <name>FAD</name>
        <dbReference type="ChEBI" id="CHEBI:57692"/>
    </ligand>
</feature>
<feature type="binding site" evidence="1">
    <location>
        <begin position="269"/>
        <end position="283"/>
    </location>
    <ligand>
        <name>NAD(+)</name>
        <dbReference type="ChEBI" id="CHEBI:57540"/>
    </ligand>
</feature>
<feature type="binding site" evidence="1">
    <location>
        <position position="366"/>
    </location>
    <ligand>
        <name>FAD</name>
        <dbReference type="ChEBI" id="CHEBI:57692"/>
    </ligand>
</feature>